<feature type="chain" id="PRO_0000116422" description="Kinetochore protein nnf1">
    <location>
        <begin position="1"/>
        <end position="205"/>
    </location>
</feature>
<feature type="helix" evidence="7">
    <location>
        <begin position="4"/>
        <end position="21"/>
    </location>
</feature>
<feature type="helix" evidence="7">
    <location>
        <begin position="25"/>
        <end position="30"/>
    </location>
</feature>
<feature type="helix" evidence="7">
    <location>
        <begin position="38"/>
        <end position="66"/>
    </location>
</feature>
<feature type="helix" evidence="7">
    <location>
        <begin position="69"/>
        <end position="88"/>
    </location>
</feature>
<feature type="helix" evidence="7">
    <location>
        <begin position="107"/>
        <end position="140"/>
    </location>
</feature>
<evidence type="ECO:0000269" key="1">
    <source>
    </source>
</evidence>
<evidence type="ECO:0000269" key="2">
    <source>
    </source>
</evidence>
<evidence type="ECO:0000269" key="3">
    <source>
    </source>
</evidence>
<evidence type="ECO:0000269" key="4">
    <source>
    </source>
</evidence>
<evidence type="ECO:0000305" key="5"/>
<evidence type="ECO:0007744" key="6">
    <source>
        <dbReference type="PDB" id="5WWL"/>
    </source>
</evidence>
<evidence type="ECO:0007829" key="7">
    <source>
        <dbReference type="PDB" id="5WWL"/>
    </source>
</evidence>
<proteinExistence type="evidence at protein level"/>
<accession>Q09858</accession>
<name>NNF1_SCHPO</name>
<dbReference type="EMBL" id="Z66525">
    <property type="protein sequence ID" value="CAA91426.1"/>
    <property type="status" value="ALT_SEQ"/>
    <property type="molecule type" value="Genomic_DNA"/>
</dbReference>
<dbReference type="EMBL" id="CU329670">
    <property type="protein sequence ID" value="CAB66467.2"/>
    <property type="molecule type" value="Genomic_DNA"/>
</dbReference>
<dbReference type="PIR" id="S62510">
    <property type="entry name" value="S62510"/>
</dbReference>
<dbReference type="RefSeq" id="NP_594562.2">
    <property type="nucleotide sequence ID" value="NM_001019991.2"/>
</dbReference>
<dbReference type="PDB" id="5WWL">
    <property type="method" value="X-ray"/>
    <property type="resolution" value="2.40 A"/>
    <property type="chains" value="N=1-172"/>
</dbReference>
<dbReference type="PDBsum" id="5WWL"/>
<dbReference type="SMR" id="Q09858"/>
<dbReference type="FunCoup" id="Q09858">
    <property type="interactions" value="54"/>
</dbReference>
<dbReference type="STRING" id="284812.Q09858"/>
<dbReference type="PaxDb" id="4896-SPAC29E6.04.1"/>
<dbReference type="EnsemblFungi" id="SPAC29E6.04.1">
    <property type="protein sequence ID" value="SPAC29E6.04.1:pep"/>
    <property type="gene ID" value="SPAC29E6.04"/>
</dbReference>
<dbReference type="GeneID" id="2541667"/>
<dbReference type="KEGG" id="spo:2541667"/>
<dbReference type="PomBase" id="SPAC29E6.04">
    <property type="gene designation" value="nnf1"/>
</dbReference>
<dbReference type="eggNOG" id="ENOG502S9JT">
    <property type="taxonomic scope" value="Eukaryota"/>
</dbReference>
<dbReference type="InParanoid" id="Q09858"/>
<dbReference type="OMA" id="SSCFPEY"/>
<dbReference type="PhylomeDB" id="Q09858"/>
<dbReference type="PRO" id="PR:Q09858"/>
<dbReference type="Proteomes" id="UP000002485">
    <property type="component" value="Chromosome I"/>
</dbReference>
<dbReference type="GO" id="GO:0000779">
    <property type="term" value="C:condensed chromosome, centromeric region"/>
    <property type="evidence" value="ECO:0000314"/>
    <property type="project" value="PomBase"/>
</dbReference>
<dbReference type="GO" id="GO:0000776">
    <property type="term" value="C:kinetochore"/>
    <property type="evidence" value="ECO:0000314"/>
    <property type="project" value="PomBase"/>
</dbReference>
<dbReference type="GO" id="GO:0000444">
    <property type="term" value="C:MIS12/MIND type complex"/>
    <property type="evidence" value="ECO:0000314"/>
    <property type="project" value="PomBase"/>
</dbReference>
<dbReference type="GO" id="GO:0005634">
    <property type="term" value="C:nucleus"/>
    <property type="evidence" value="ECO:0007669"/>
    <property type="project" value="UniProtKB-SubCell"/>
</dbReference>
<dbReference type="GO" id="GO:0000940">
    <property type="term" value="C:outer kinetochore"/>
    <property type="evidence" value="ECO:0000314"/>
    <property type="project" value="PomBase"/>
</dbReference>
<dbReference type="GO" id="GO:0051315">
    <property type="term" value="P:attachment of mitotic spindle microtubules to kinetochore"/>
    <property type="evidence" value="ECO:0000305"/>
    <property type="project" value="PomBase"/>
</dbReference>
<dbReference type="GO" id="GO:0051301">
    <property type="term" value="P:cell division"/>
    <property type="evidence" value="ECO:0007669"/>
    <property type="project" value="UniProtKB-KW"/>
</dbReference>
<dbReference type="GO" id="GO:0007059">
    <property type="term" value="P:chromosome segregation"/>
    <property type="evidence" value="ECO:0000318"/>
    <property type="project" value="GO_Central"/>
</dbReference>
<dbReference type="GO" id="GO:0051455">
    <property type="term" value="P:spindle attachment to meiosis I kinetochore"/>
    <property type="evidence" value="ECO:0000305"/>
    <property type="project" value="PomBase"/>
</dbReference>
<dbReference type="InterPro" id="IPR016851">
    <property type="entry name" value="Nnf1"/>
</dbReference>
<dbReference type="InterPro" id="IPR007128">
    <property type="entry name" value="PMF1/Nnf1"/>
</dbReference>
<dbReference type="PANTHER" id="PTHR15459">
    <property type="entry name" value="POLYAMINE-MODULATED FACTOR 1"/>
    <property type="match status" value="1"/>
</dbReference>
<dbReference type="PANTHER" id="PTHR15459:SF3">
    <property type="entry name" value="POLYAMINE-MODULATED FACTOR 1"/>
    <property type="match status" value="1"/>
</dbReference>
<dbReference type="Pfam" id="PF03980">
    <property type="entry name" value="Nnf1"/>
    <property type="match status" value="1"/>
</dbReference>
<dbReference type="PIRSF" id="PIRSF027153">
    <property type="entry name" value="Nnf1p"/>
    <property type="match status" value="1"/>
</dbReference>
<organism>
    <name type="scientific">Schizosaccharomyces pombe (strain 972 / ATCC 24843)</name>
    <name type="common">Fission yeast</name>
    <dbReference type="NCBI Taxonomy" id="284812"/>
    <lineage>
        <taxon>Eukaryota</taxon>
        <taxon>Fungi</taxon>
        <taxon>Dikarya</taxon>
        <taxon>Ascomycota</taxon>
        <taxon>Taphrinomycotina</taxon>
        <taxon>Schizosaccharomycetes</taxon>
        <taxon>Schizosaccharomycetales</taxon>
        <taxon>Schizosaccharomycetaceae</taxon>
        <taxon>Schizosaccharomyces</taxon>
    </lineage>
</organism>
<reference key="1">
    <citation type="journal article" date="2002" name="Nature">
        <title>The genome sequence of Schizosaccharomyces pombe.</title>
        <authorList>
            <person name="Wood V."/>
            <person name="Gwilliam R."/>
            <person name="Rajandream M.A."/>
            <person name="Lyne M.H."/>
            <person name="Lyne R."/>
            <person name="Stewart A."/>
            <person name="Sgouros J.G."/>
            <person name="Peat N."/>
            <person name="Hayles J."/>
            <person name="Baker S.G."/>
            <person name="Basham D."/>
            <person name="Bowman S."/>
            <person name="Brooks K."/>
            <person name="Brown D."/>
            <person name="Brown S."/>
            <person name="Chillingworth T."/>
            <person name="Churcher C.M."/>
            <person name="Collins M."/>
            <person name="Connor R."/>
            <person name="Cronin A."/>
            <person name="Davis P."/>
            <person name="Feltwell T."/>
            <person name="Fraser A."/>
            <person name="Gentles S."/>
            <person name="Goble A."/>
            <person name="Hamlin N."/>
            <person name="Harris D.E."/>
            <person name="Hidalgo J."/>
            <person name="Hodgson G."/>
            <person name="Holroyd S."/>
            <person name="Hornsby T."/>
            <person name="Howarth S."/>
            <person name="Huckle E.J."/>
            <person name="Hunt S."/>
            <person name="Jagels K."/>
            <person name="James K.D."/>
            <person name="Jones L."/>
            <person name="Jones M."/>
            <person name="Leather S."/>
            <person name="McDonald S."/>
            <person name="McLean J."/>
            <person name="Mooney P."/>
            <person name="Moule S."/>
            <person name="Mungall K.L."/>
            <person name="Murphy L.D."/>
            <person name="Niblett D."/>
            <person name="Odell C."/>
            <person name="Oliver K."/>
            <person name="O'Neil S."/>
            <person name="Pearson D."/>
            <person name="Quail M.A."/>
            <person name="Rabbinowitsch E."/>
            <person name="Rutherford K.M."/>
            <person name="Rutter S."/>
            <person name="Saunders D."/>
            <person name="Seeger K."/>
            <person name="Sharp S."/>
            <person name="Skelton J."/>
            <person name="Simmonds M.N."/>
            <person name="Squares R."/>
            <person name="Squares S."/>
            <person name="Stevens K."/>
            <person name="Taylor K."/>
            <person name="Taylor R.G."/>
            <person name="Tivey A."/>
            <person name="Walsh S.V."/>
            <person name="Warren T."/>
            <person name="Whitehead S."/>
            <person name="Woodward J.R."/>
            <person name="Volckaert G."/>
            <person name="Aert R."/>
            <person name="Robben J."/>
            <person name="Grymonprez B."/>
            <person name="Weltjens I."/>
            <person name="Vanstreels E."/>
            <person name="Rieger M."/>
            <person name="Schaefer M."/>
            <person name="Mueller-Auer S."/>
            <person name="Gabel C."/>
            <person name="Fuchs M."/>
            <person name="Duesterhoeft A."/>
            <person name="Fritzc C."/>
            <person name="Holzer E."/>
            <person name="Moestl D."/>
            <person name="Hilbert H."/>
            <person name="Borzym K."/>
            <person name="Langer I."/>
            <person name="Beck A."/>
            <person name="Lehrach H."/>
            <person name="Reinhardt R."/>
            <person name="Pohl T.M."/>
            <person name="Eger P."/>
            <person name="Zimmermann W."/>
            <person name="Wedler H."/>
            <person name="Wambutt R."/>
            <person name="Purnelle B."/>
            <person name="Goffeau A."/>
            <person name="Cadieu E."/>
            <person name="Dreano S."/>
            <person name="Gloux S."/>
            <person name="Lelaure V."/>
            <person name="Mottier S."/>
            <person name="Galibert F."/>
            <person name="Aves S.J."/>
            <person name="Xiang Z."/>
            <person name="Hunt C."/>
            <person name="Moore K."/>
            <person name="Hurst S.M."/>
            <person name="Lucas M."/>
            <person name="Rochet M."/>
            <person name="Gaillardin C."/>
            <person name="Tallada V.A."/>
            <person name="Garzon A."/>
            <person name="Thode G."/>
            <person name="Daga R.R."/>
            <person name="Cruzado L."/>
            <person name="Jimenez J."/>
            <person name="Sanchez M."/>
            <person name="del Rey F."/>
            <person name="Benito J."/>
            <person name="Dominguez A."/>
            <person name="Revuelta J.L."/>
            <person name="Moreno S."/>
            <person name="Armstrong J."/>
            <person name="Forsburg S.L."/>
            <person name="Cerutti L."/>
            <person name="Lowe T."/>
            <person name="McCombie W.R."/>
            <person name="Paulsen I."/>
            <person name="Potashkin J."/>
            <person name="Shpakovski G.V."/>
            <person name="Ussery D."/>
            <person name="Barrell B.G."/>
            <person name="Nurse P."/>
        </authorList>
    </citation>
    <scope>NUCLEOTIDE SEQUENCE [LARGE SCALE GENOMIC DNA]</scope>
    <source>
        <strain>972 / ATCC 24843</strain>
    </source>
</reference>
<reference key="2">
    <citation type="journal article" date="2005" name="EMBO J.">
        <title>Molecular analysis of kinetochore architecture in fission yeast.</title>
        <authorList>
            <person name="Liu X."/>
            <person name="McLeod I."/>
            <person name="Anderson S."/>
            <person name="Yates J.R. III"/>
            <person name="He X."/>
        </authorList>
    </citation>
    <scope>IDENTIFICATION IN THE NMS COMPLEX</scope>
</reference>
<reference key="3">
    <citation type="journal article" date="2006" name="Mol. Biol. Cell">
        <title>Reconstruction of the kinetochore during meiosis in fission yeast Schizosaccharomyces pombe.</title>
        <authorList>
            <person name="Hayashi A."/>
            <person name="Asakawa H."/>
            <person name="Haraguchi T."/>
            <person name="Hiraoka Y."/>
        </authorList>
    </citation>
    <scope>REVISION OF GENE MODEL</scope>
    <scope>IDENTIFICATION IN THE NMS COMPLEX</scope>
</reference>
<reference key="4">
    <citation type="journal article" date="2023" name="J. Cell Biol.">
        <title>Unraveling the kinetochore nanostructure in Schizosaccharomyces pombe using multi-color SMLM imaging.</title>
        <authorList>
            <person name="Virant D."/>
            <person name="Vojnovic I."/>
            <person name="Winkelmeier J."/>
            <person name="Endesfelder M."/>
            <person name="Turkowyd B."/>
            <person name="Lando D."/>
            <person name="Endesfelder U."/>
        </authorList>
    </citation>
    <scope>SUBUNIT</scope>
    <scope>SUBCELLULAR LOCATION</scope>
</reference>
<reference evidence="6" key="5">
    <citation type="journal article" date="2017" name="Proc. Natl. Acad. Sci. U.S.A.">
        <title>Phosphorylation of CENP-C by Aurora B facilitates kinetochore attachment error correction in mitosis.</title>
        <authorList>
            <person name="Zhou X."/>
            <person name="Zheng F."/>
            <person name="Wang C."/>
            <person name="Wu M."/>
            <person name="Zhang X."/>
            <person name="Wang Q."/>
            <person name="Yao X."/>
            <person name="Fu C."/>
            <person name="Zhang X."/>
            <person name="Zang J."/>
        </authorList>
    </citation>
    <scope>X-RAY CRYSTALLOGRAPHY (2.40 ANGSTROMS) OF 1-172</scope>
    <scope>SUBUNIT</scope>
</reference>
<sequence>MTSRKEQLDAFLSRTLSETIAHIPLEKFAQCFPSMKKGKVIAVIHQQLIEFFEKSCKQEYANLIKERDLNKKLDMLDECIHDAEFRKLHGESEVDISNKQPQEILKAHLYSHKRELLDKLNQDLLDIDKENEGLSTQIAAEEKATEDCISRMQSLIQKLEKTVYGMNEKNLAKEAHDTLNDLLPYIQNPSSTWTNALNEQGNIER</sequence>
<protein>
    <recommendedName>
        <fullName>Kinetochore protein nnf1</fullName>
    </recommendedName>
    <alternativeName>
        <fullName>NMS complex subunit nnf1</fullName>
    </alternativeName>
</protein>
<gene>
    <name type="primary">nnf1</name>
    <name type="ORF">SPAC29E6.04</name>
    <name type="ORF">SPAC30.08</name>
</gene>
<comment type="function">
    <text evidence="1 2 4">Part of the Mis12c/MINDc subcomplex in the outer kinetochore which has a role in kinetochore function during late meiotic prophase and throughout the mitotic cell cycle.</text>
</comment>
<comment type="subunit">
    <text evidence="1 2 3 4">Component of the Mis12c/MINDc subcomplex in the outer kinetochore. The KMN (Knl1c-Mis12c-Ndc80c) protein network forms the outer layer of kinetochores. The KMN network is composed of three subcomplexes: Knl1c (spc7 and sos7), Mis12c/MINDc (mis12, nnf1, mis13, and mis14), and Ndc80c (ndc80, nuf2, spc24, and spc25) (PubMed:16079914, PubMed:17035632, PubMed:36705602). The mis12-nnf1 protein dimer directly binds to the centromere histone cnp3 (PubMed:29180432).</text>
</comment>
<comment type="subcellular location">
    <subcellularLocation>
        <location evidence="4">Nucleus</location>
    </subcellularLocation>
    <subcellularLocation>
        <location evidence="4">Chromosome</location>
        <location evidence="4">Centromere</location>
        <location evidence="4">Kinetochore</location>
    </subcellularLocation>
    <text evidence="4">Associates with the outer kinetochore.</text>
</comment>
<comment type="sequence caution" evidence="5">
    <conflict type="erroneous gene model prediction">
        <sequence resource="EMBL-CDS" id="CAA91426"/>
    </conflict>
</comment>
<keyword id="KW-0002">3D-structure</keyword>
<keyword id="KW-0131">Cell cycle</keyword>
<keyword id="KW-0132">Cell division</keyword>
<keyword id="KW-0137">Centromere</keyword>
<keyword id="KW-0158">Chromosome</keyword>
<keyword id="KW-0995">Kinetochore</keyword>
<keyword id="KW-0469">Meiosis</keyword>
<keyword id="KW-0498">Mitosis</keyword>
<keyword id="KW-0539">Nucleus</keyword>
<keyword id="KW-1185">Reference proteome</keyword>